<comment type="function">
    <text evidence="1">Catalyzes the synthesis of gamma-glutamylcysteine (gamma-GC), the main low-molecular-weight thiol compound instead of glutathione in halophilic archaea.</text>
</comment>
<comment type="catalytic activity">
    <reaction evidence="1">
        <text>L-cysteine + L-glutamate + ATP = gamma-L-glutamyl-L-cysteine + ADP + phosphate + H(+)</text>
        <dbReference type="Rhea" id="RHEA:13285"/>
        <dbReference type="ChEBI" id="CHEBI:15378"/>
        <dbReference type="ChEBI" id="CHEBI:29985"/>
        <dbReference type="ChEBI" id="CHEBI:30616"/>
        <dbReference type="ChEBI" id="CHEBI:35235"/>
        <dbReference type="ChEBI" id="CHEBI:43474"/>
        <dbReference type="ChEBI" id="CHEBI:58173"/>
        <dbReference type="ChEBI" id="CHEBI:456216"/>
        <dbReference type="EC" id="6.3.2.2"/>
    </reaction>
</comment>
<comment type="similarity">
    <text evidence="1">Belongs to the glutamate--cysteine ligase type 2 family. YbdK subfamily.</text>
</comment>
<organism>
    <name type="scientific">Natronomonas pharaonis (strain ATCC 35678 / DSM 2160 / CIP 103997 / JCM 8858 / NBRC 14720 / NCIMB 2260 / Gabara)</name>
    <name type="common">Halobacterium pharaonis</name>
    <dbReference type="NCBI Taxonomy" id="348780"/>
    <lineage>
        <taxon>Archaea</taxon>
        <taxon>Methanobacteriati</taxon>
        <taxon>Methanobacteriota</taxon>
        <taxon>Stenosarchaea group</taxon>
        <taxon>Halobacteria</taxon>
        <taxon>Halobacteriales</taxon>
        <taxon>Haloarculaceae</taxon>
        <taxon>Natronomonas</taxon>
    </lineage>
</organism>
<reference key="1">
    <citation type="journal article" date="2005" name="Genome Res.">
        <title>Living with two extremes: conclusions from the genome sequence of Natronomonas pharaonis.</title>
        <authorList>
            <person name="Falb M."/>
            <person name="Pfeiffer F."/>
            <person name="Palm P."/>
            <person name="Rodewald K."/>
            <person name="Hickmann V."/>
            <person name="Tittor J."/>
            <person name="Oesterhelt D."/>
        </authorList>
    </citation>
    <scope>NUCLEOTIDE SEQUENCE [LARGE SCALE GENOMIC DNA]</scope>
    <source>
        <strain>ATCC 35678 / DSM 2160 / CIP 103997 / JCM 8858 / NBRC 14720 / NCIMB 2260 / Gabara</strain>
    </source>
</reference>
<feature type="chain" id="PRO_0000255819" description="Glutamate--cysteine ligase">
    <location>
        <begin position="1"/>
        <end position="362"/>
    </location>
</feature>
<sequence>MDLGSREAFDRTGTLGIEEEFFVVDEYGRPTAGTDELVYENEPPEPLKDRLDHELFKCVIETQTPTIGSLSAADDALAEVRKALVSHAETHGFGIAAAGLHPAAKWRELDHAEKPRYRAQLDRIQYPQHRNTTAGLHIHVGVDDADKAVWVANELRWYMPVMLALSANSPYWNGFDTGLQSARAKIFEALPNTGMPTAFEDFESFQSFERTMVETGSINDRGELWYDVRPHSEHGTVEVRTPDGQADPDHVLAFVEYTQALVEDLSARYEDGESGANHRRELLDENKWRALRHGHDAELLDRSLEESVPLGELVESECQRLGVSGIRDVYEAESGAEKQRRLLESEGMDALCGSLSVEWDSS</sequence>
<accession>Q3IQ21</accession>
<protein>
    <recommendedName>
        <fullName evidence="1">Glutamate--cysteine ligase</fullName>
        <ecNumber evidence="1">6.3.2.2</ecNumber>
    </recommendedName>
    <alternativeName>
        <fullName evidence="1">Gamma-glutamylcysteine synthetase</fullName>
        <shortName evidence="1">GCS</shortName>
        <shortName evidence="1">Gamma-GCS</shortName>
    </alternativeName>
</protein>
<gene>
    <name evidence="1" type="primary">gshA</name>
    <name type="ordered locus">NP_3372A</name>
</gene>
<evidence type="ECO:0000255" key="1">
    <source>
        <dbReference type="HAMAP-Rule" id="MF_01609"/>
    </source>
</evidence>
<dbReference type="EC" id="6.3.2.2" evidence="1"/>
<dbReference type="EMBL" id="CR936257">
    <property type="protein sequence ID" value="CAI49777.1"/>
    <property type="molecule type" value="Genomic_DNA"/>
</dbReference>
<dbReference type="RefSeq" id="WP_011323397.1">
    <property type="nucleotide sequence ID" value="NC_007426.1"/>
</dbReference>
<dbReference type="SMR" id="Q3IQ21"/>
<dbReference type="STRING" id="348780.NP_3372A"/>
<dbReference type="EnsemblBacteria" id="CAI49777">
    <property type="protein sequence ID" value="CAI49777"/>
    <property type="gene ID" value="NP_3372A"/>
</dbReference>
<dbReference type="GeneID" id="3701754"/>
<dbReference type="KEGG" id="nph:NP_3372A"/>
<dbReference type="eggNOG" id="arCOG02722">
    <property type="taxonomic scope" value="Archaea"/>
</dbReference>
<dbReference type="HOGENOM" id="CLU_044848_1_0_2"/>
<dbReference type="OrthoDB" id="287652at2157"/>
<dbReference type="Proteomes" id="UP000002698">
    <property type="component" value="Chromosome"/>
</dbReference>
<dbReference type="GO" id="GO:0005524">
    <property type="term" value="F:ATP binding"/>
    <property type="evidence" value="ECO:0007669"/>
    <property type="project" value="UniProtKB-KW"/>
</dbReference>
<dbReference type="GO" id="GO:0004357">
    <property type="term" value="F:glutamate-cysteine ligase activity"/>
    <property type="evidence" value="ECO:0007669"/>
    <property type="project" value="UniProtKB-UniRule"/>
</dbReference>
<dbReference type="GO" id="GO:0042398">
    <property type="term" value="P:modified amino acid biosynthetic process"/>
    <property type="evidence" value="ECO:0007669"/>
    <property type="project" value="InterPro"/>
</dbReference>
<dbReference type="Gene3D" id="3.30.590.20">
    <property type="match status" value="1"/>
</dbReference>
<dbReference type="HAMAP" id="MF_01609">
    <property type="entry name" value="Glu_cys_ligase_2"/>
    <property type="match status" value="1"/>
</dbReference>
<dbReference type="InterPro" id="IPR050141">
    <property type="entry name" value="GCL_type2/YbdK_subfam"/>
</dbReference>
<dbReference type="InterPro" id="IPR006336">
    <property type="entry name" value="GCS2"/>
</dbReference>
<dbReference type="InterPro" id="IPR014746">
    <property type="entry name" value="Gln_synth/guanido_kin_cat_dom"/>
</dbReference>
<dbReference type="InterPro" id="IPR011793">
    <property type="entry name" value="YbdK"/>
</dbReference>
<dbReference type="NCBIfam" id="TIGR02050">
    <property type="entry name" value="gshA_cyan_rel"/>
    <property type="match status" value="1"/>
</dbReference>
<dbReference type="NCBIfam" id="NF010045">
    <property type="entry name" value="PRK13518.1"/>
    <property type="match status" value="1"/>
</dbReference>
<dbReference type="PANTHER" id="PTHR36510">
    <property type="entry name" value="GLUTAMATE--CYSTEINE LIGASE 2-RELATED"/>
    <property type="match status" value="1"/>
</dbReference>
<dbReference type="PANTHER" id="PTHR36510:SF1">
    <property type="entry name" value="GLUTAMATE--CYSTEINE LIGASE 2-RELATED"/>
    <property type="match status" value="1"/>
</dbReference>
<dbReference type="Pfam" id="PF04107">
    <property type="entry name" value="GCS2"/>
    <property type="match status" value="1"/>
</dbReference>
<dbReference type="SUPFAM" id="SSF55931">
    <property type="entry name" value="Glutamine synthetase/guanido kinase"/>
    <property type="match status" value="1"/>
</dbReference>
<keyword id="KW-0067">ATP-binding</keyword>
<keyword id="KW-0436">Ligase</keyword>
<keyword id="KW-0547">Nucleotide-binding</keyword>
<keyword id="KW-1185">Reference proteome</keyword>
<name>GCS2_NATPD</name>
<proteinExistence type="inferred from homology"/>